<organism>
    <name type="scientific">Brugia malayi</name>
    <name type="common">Filarial nematode worm</name>
    <dbReference type="NCBI Taxonomy" id="6279"/>
    <lineage>
        <taxon>Eukaryota</taxon>
        <taxon>Metazoa</taxon>
        <taxon>Ecdysozoa</taxon>
        <taxon>Nematoda</taxon>
        <taxon>Chromadorea</taxon>
        <taxon>Rhabditida</taxon>
        <taxon>Spirurina</taxon>
        <taxon>Spiruromorpha</taxon>
        <taxon>Filarioidea</taxon>
        <taxon>Onchocercidae</taxon>
        <taxon>Brugia</taxon>
    </lineage>
</organism>
<accession>A8NS89</accession>
<sequence length="492" mass="55119">MTETVTDQGKQRSSKLQKNEAAKDEQVEGKGKETLESGTDKSAEQNSSLLVGQPDVIDNDNVQTVDDFKNLMYKMQETRRAIVFALLNEKDLTKDDVEILKRAYEKLTDNQTHSFQREMCTLTTKLSVNIGDETRGLEKDLKYLDALMNIRREEPNLLWPIIMSRVDLFSILANYHPKGKETFLKEYEDTVKFLKTFISSEAITGKKPIFITDWDGTMKDYCSQYATNLQPVYSAVGMTRFAASFTRISAVLTAGPLRGPGILDLTAMPIDGPVMFSGSWGREWWLSGKRVVHQDGITDEGFNALQRLDDEMKDLLHTSDYAPFALVGSGVQRKVDRLTLGVQTVCHHVTSELSNRYQMAVKERMHRVDPNSQILVFDPSTELEVEVVAHNSGIIWNKGNGVERLIKSLGDSLQSPGKILICGDTLSDIPMVRQAVKQNPDGVLAIFVGAKMSLREEVKQVIGDESRCCFVSCPDVIHAAMSQILNEHCIGK</sequence>
<reference key="1">
    <citation type="journal article" date="2007" name="Science">
        <title>Draft genome of the filarial nematode parasite Brugia malayi.</title>
        <authorList>
            <person name="Ghedin E."/>
            <person name="Wang S."/>
            <person name="Spiro D."/>
            <person name="Caler E."/>
            <person name="Zhao Q."/>
            <person name="Crabtree J."/>
            <person name="Allen J.E."/>
            <person name="Delcher A.L."/>
            <person name="Guiliano D.B."/>
            <person name="Miranda-Saavedra D."/>
            <person name="Angiuoli S.V."/>
            <person name="Creasy T."/>
            <person name="Amedeo P."/>
            <person name="Haas B."/>
            <person name="El-Sayed N.M."/>
            <person name="Wortman J.R."/>
            <person name="Feldblyum T."/>
            <person name="Tallon L."/>
            <person name="Schatz M."/>
            <person name="Shumway M."/>
            <person name="Koo H."/>
            <person name="Salzberg S.L."/>
            <person name="Schobel S."/>
            <person name="Pertea M."/>
            <person name="Pop M."/>
            <person name="White O."/>
            <person name="Barton G.J."/>
            <person name="Carlow C.K.S."/>
            <person name="Crawford M.J."/>
            <person name="Daub J."/>
            <person name="Dimmic M.W."/>
            <person name="Estes C.F."/>
            <person name="Foster J.M."/>
            <person name="Ganatra M."/>
            <person name="Gregory W.F."/>
            <person name="Johnson N.M."/>
            <person name="Jin J."/>
            <person name="Komuniecki R."/>
            <person name="Korf I."/>
            <person name="Kumar S."/>
            <person name="Laney S."/>
            <person name="Li B.-W."/>
            <person name="Li W."/>
            <person name="Lindblom T.H."/>
            <person name="Lustigman S."/>
            <person name="Ma D."/>
            <person name="Maina C.V."/>
            <person name="Martin D.M."/>
            <person name="McCarter J.P."/>
            <person name="McReynolds L."/>
            <person name="Mitreva M."/>
            <person name="Nutman T.B."/>
            <person name="Parkinson J."/>
            <person name="Peregrin-Alvarez J.M."/>
            <person name="Poole C."/>
            <person name="Ren Q."/>
            <person name="Saunders L."/>
            <person name="Sluder A.E."/>
            <person name="Smith K."/>
            <person name="Stanke M."/>
            <person name="Unnasch T.R."/>
            <person name="Ware J."/>
            <person name="Wei A.D."/>
            <person name="Weil G."/>
            <person name="Williams D.J."/>
            <person name="Zhang Y."/>
            <person name="Williams S.A."/>
            <person name="Fraser-Liggett C."/>
            <person name="Slatko B."/>
            <person name="Blaxter M.L."/>
            <person name="Scott A.L."/>
        </authorList>
    </citation>
    <scope>NUCLEOTIDE SEQUENCE [LARGE SCALE GENOMIC DNA]</scope>
</reference>
<reference key="2">
    <citation type="journal article" date="2014" name="PLoS Pathog.">
        <title>Structure of the trehalose-6-phosphate phosphatase from Brugia malayi reveals key design principles for anthelmintic drugs.</title>
        <authorList>
            <person name="Farelli J.D."/>
            <person name="Galvin B.D."/>
            <person name="Li Z."/>
            <person name="Liu C."/>
            <person name="Aono M."/>
            <person name="Garland M."/>
            <person name="Hallett O.E."/>
            <person name="Causey T.B."/>
            <person name="Ali-Reynolds A."/>
            <person name="Saltzberg D.J."/>
            <person name="Carlow C.K."/>
            <person name="Dunaway-Mariano D."/>
            <person name="Allen K.N."/>
        </authorList>
    </citation>
    <scope>X-RAY CRYSTALLOGRAPHY (3.0 ANGSTROMS) IN COMPLEX WITH MAGNESIUM</scope>
    <scope>CATALYTIC ACTIVITY</scope>
    <scope>FUNCTION</scope>
    <scope>COFACTOR</scope>
    <scope>ACTIVITY REGULATION</scope>
    <scope>BIOPHYSICOCHEMICAL PROPERTIES</scope>
    <scope>ACTIVE SITE</scope>
    <scope>MUTAGENESIS OF ASP-213; ASP-215; TYR-221; SER-329; GLN-332; LYS-334; ASP-336; ARG-337 AND GLU-386</scope>
</reference>
<name>GOB1_BRUMA</name>
<dbReference type="EC" id="3.1.3.12" evidence="2"/>
<dbReference type="EMBL" id="DS237867">
    <property type="protein sequence ID" value="EDP37955.1"/>
    <property type="molecule type" value="Genomic_DNA"/>
</dbReference>
<dbReference type="PDB" id="4OFZ">
    <property type="method" value="X-ray"/>
    <property type="resolution" value="3.00 A"/>
    <property type="chains" value="A=1-492"/>
</dbReference>
<dbReference type="PDB" id="5E0O">
    <property type="method" value="X-ray"/>
    <property type="resolution" value="3.00 A"/>
    <property type="chains" value="A=1-492"/>
</dbReference>
<dbReference type="PDBsum" id="4OFZ"/>
<dbReference type="PDBsum" id="5E0O"/>
<dbReference type="SMR" id="A8NS89"/>
<dbReference type="FunCoup" id="A8NS89">
    <property type="interactions" value="160"/>
</dbReference>
<dbReference type="STRING" id="6279.A8NS89"/>
<dbReference type="BindingDB" id="A8NS89"/>
<dbReference type="ChEMBL" id="CHEMBL4105873"/>
<dbReference type="EnsemblMetazoa" id="Bm4641.1">
    <property type="protein sequence ID" value="Bm4641.1"/>
    <property type="gene ID" value="WBGene00224902"/>
</dbReference>
<dbReference type="GeneID" id="6096670"/>
<dbReference type="KEGG" id="bmy:BM_BM4641"/>
<dbReference type="CTD" id="6096670"/>
<dbReference type="WormBase" id="Bm4641">
    <property type="protein sequence ID" value="BM04374"/>
    <property type="gene ID" value="WBGene00224902"/>
    <property type="gene designation" value="Bma-gob-1"/>
</dbReference>
<dbReference type="HOGENOM" id="CLU_033472_0_0_1"/>
<dbReference type="InParanoid" id="A8NS89"/>
<dbReference type="OMA" id="YCGRYRS"/>
<dbReference type="OrthoDB" id="5781377at2759"/>
<dbReference type="BRENDA" id="3.1.3.12">
    <property type="organism ID" value="997"/>
</dbReference>
<dbReference type="EvolutionaryTrace" id="A8NS89"/>
<dbReference type="Proteomes" id="UP000006672">
    <property type="component" value="Unassembled WGS sequence"/>
</dbReference>
<dbReference type="GO" id="GO:0005737">
    <property type="term" value="C:cytoplasm"/>
    <property type="evidence" value="ECO:0007669"/>
    <property type="project" value="EnsemblMetazoa"/>
</dbReference>
<dbReference type="GO" id="GO:0000287">
    <property type="term" value="F:magnesium ion binding"/>
    <property type="evidence" value="ECO:0000314"/>
    <property type="project" value="UniProtKB"/>
</dbReference>
<dbReference type="GO" id="GO:0004805">
    <property type="term" value="F:trehalose-phosphatase activity"/>
    <property type="evidence" value="ECO:0000314"/>
    <property type="project" value="UniProtKB"/>
</dbReference>
<dbReference type="GO" id="GO:1901136">
    <property type="term" value="P:carbohydrate derivative catabolic process"/>
    <property type="evidence" value="ECO:0000314"/>
    <property type="project" value="UniProtKB"/>
</dbReference>
<dbReference type="GO" id="GO:0016311">
    <property type="term" value="P:dephosphorylation"/>
    <property type="evidence" value="ECO:0000314"/>
    <property type="project" value="UniProtKB"/>
</dbReference>
<dbReference type="GO" id="GO:0005992">
    <property type="term" value="P:trehalose biosynthetic process"/>
    <property type="evidence" value="ECO:0000314"/>
    <property type="project" value="UniProtKB"/>
</dbReference>
<dbReference type="FunFam" id="3.30.70.3080:FF:000001">
    <property type="entry name" value="Trehalose-phosphatase"/>
    <property type="match status" value="1"/>
</dbReference>
<dbReference type="Gene3D" id="1.20.58.1800">
    <property type="match status" value="1"/>
</dbReference>
<dbReference type="Gene3D" id="3.30.70.3080">
    <property type="match status" value="1"/>
</dbReference>
<dbReference type="Gene3D" id="3.40.50.1000">
    <property type="entry name" value="HAD superfamily/HAD-like"/>
    <property type="match status" value="1"/>
</dbReference>
<dbReference type="InterPro" id="IPR036412">
    <property type="entry name" value="HAD-like_sf"/>
</dbReference>
<dbReference type="InterPro" id="IPR023214">
    <property type="entry name" value="HAD_sf"/>
</dbReference>
<dbReference type="InterPro" id="IPR049063">
    <property type="entry name" value="T6PP_C"/>
</dbReference>
<dbReference type="InterPro" id="IPR041064">
    <property type="entry name" value="T6PP_helical"/>
</dbReference>
<dbReference type="Pfam" id="PF21141">
    <property type="entry name" value="T6PP_C"/>
    <property type="match status" value="1"/>
</dbReference>
<dbReference type="Pfam" id="PF18572">
    <property type="entry name" value="T6PP_N"/>
    <property type="match status" value="1"/>
</dbReference>
<dbReference type="SUPFAM" id="SSF56784">
    <property type="entry name" value="HAD-like"/>
    <property type="match status" value="1"/>
</dbReference>
<evidence type="ECO:0000256" key="1">
    <source>
        <dbReference type="SAM" id="MobiDB-lite"/>
    </source>
</evidence>
<evidence type="ECO:0000269" key="2">
    <source>
    </source>
</evidence>
<evidence type="ECO:0000303" key="3">
    <source>
    </source>
</evidence>
<evidence type="ECO:0000305" key="4"/>
<evidence type="ECO:0007829" key="5">
    <source>
        <dbReference type="PDB" id="4OFZ"/>
    </source>
</evidence>
<evidence type="ECO:0007829" key="6">
    <source>
        <dbReference type="PDB" id="5E0O"/>
    </source>
</evidence>
<proteinExistence type="evidence at protein level"/>
<comment type="function">
    <text evidence="2">Catalyzes the hydrolysis of trehalose 6-phosphate to trehalose and phosphate; prevents the accumulation of toxic levels of trehalose 6-phosphate.</text>
</comment>
<comment type="catalytic activity">
    <reaction evidence="2">
        <text>alpha,alpha-trehalose 6-phosphate + H2O = alpha,alpha-trehalose + phosphate</text>
        <dbReference type="Rhea" id="RHEA:23420"/>
        <dbReference type="ChEBI" id="CHEBI:15377"/>
        <dbReference type="ChEBI" id="CHEBI:16551"/>
        <dbReference type="ChEBI" id="CHEBI:43474"/>
        <dbReference type="ChEBI" id="CHEBI:58429"/>
        <dbReference type="EC" id="3.1.3.12"/>
    </reaction>
</comment>
<comment type="cofactor">
    <cofactor evidence="2">
        <name>Mg(2+)</name>
        <dbReference type="ChEBI" id="CHEBI:18420"/>
    </cofactor>
    <text evidence="2">Binds 1 Mg(2+) ion per subunit.</text>
</comment>
<comment type="activity regulation">
    <text evidence="2">Inhibited by trehalose 6-sulfate.</text>
</comment>
<comment type="biophysicochemical properties">
    <kinetics>
        <KM evidence="2">360 uM for trehalose 6-phosphate</KM>
        <text evidence="2">kcat is 24 sec(-1) for trehalose 6-phosphate.</text>
    </kinetics>
</comment>
<comment type="similarity">
    <text evidence="4">Belongs to the gob-1 trehalose phosphatase family.</text>
</comment>
<gene>
    <name type="ORF">Bm1_08695</name>
</gene>
<protein>
    <recommendedName>
        <fullName>Trehalose-phosphatase</fullName>
        <ecNumber evidence="2">3.1.3.12</ecNumber>
    </recommendedName>
    <alternativeName>
        <fullName evidence="3">Trehalose-6-phosphate phosphatase</fullName>
        <shortName>TPP</shortName>
    </alternativeName>
</protein>
<feature type="chain" id="PRO_0000385170" description="Trehalose-phosphatase">
    <location>
        <begin position="1"/>
        <end position="492"/>
    </location>
</feature>
<feature type="region of interest" description="Disordered" evidence="1">
    <location>
        <begin position="1"/>
        <end position="55"/>
    </location>
</feature>
<feature type="compositionally biased region" description="Basic and acidic residues" evidence="1">
    <location>
        <begin position="17"/>
        <end position="43"/>
    </location>
</feature>
<feature type="active site" description="Proton donor/acceptor" evidence="3">
    <location>
        <position position="215"/>
    </location>
</feature>
<feature type="binding site" evidence="2">
    <location>
        <position position="213"/>
    </location>
    <ligand>
        <name>Mg(2+)</name>
        <dbReference type="ChEBI" id="CHEBI:18420"/>
    </ligand>
</feature>
<feature type="binding site" evidence="2">
    <location>
        <position position="215"/>
    </location>
    <ligand>
        <name>Mg(2+)</name>
        <dbReference type="ChEBI" id="CHEBI:18420"/>
    </ligand>
</feature>
<feature type="binding site" evidence="3">
    <location>
        <begin position="332"/>
        <end position="334"/>
    </location>
    <ligand>
        <name>substrate</name>
    </ligand>
</feature>
<feature type="binding site" evidence="2">
    <location>
        <position position="424"/>
    </location>
    <ligand>
        <name>Mg(2+)</name>
        <dbReference type="ChEBI" id="CHEBI:18420"/>
    </ligand>
</feature>
<feature type="mutagenesis site" description="Loss of catalytic activity." evidence="2">
    <original>D</original>
    <variation>A</variation>
    <location>
        <position position="213"/>
    </location>
</feature>
<feature type="mutagenesis site" description="Loss of catalytic activity." evidence="2">
    <original>D</original>
    <variation>A</variation>
    <location>
        <position position="215"/>
    </location>
</feature>
<feature type="mutagenesis site" description="Reduces catalytic activity." evidence="2">
    <original>Y</original>
    <variation>A</variation>
    <location>
        <position position="221"/>
    </location>
</feature>
<feature type="mutagenesis site" description="Reduces catalytic activity." evidence="2">
    <original>S</original>
    <variation>A</variation>
    <location>
        <position position="329"/>
    </location>
</feature>
<feature type="mutagenesis site" description="Strongly reduces catalytic activity." evidence="2">
    <original>Q</original>
    <variation>A</variation>
    <location>
        <position position="332"/>
    </location>
</feature>
<feature type="mutagenesis site" description="Strongly reduces catalytic activity." evidence="2">
    <original>K</original>
    <variation>A</variation>
    <location>
        <position position="334"/>
    </location>
</feature>
<feature type="mutagenesis site" description="Strongly reduces catalytic activity." evidence="2">
    <original>D</original>
    <variation>A</variation>
    <location>
        <position position="336"/>
    </location>
</feature>
<feature type="mutagenesis site" description="Strongly reduces catalytic activity." evidence="2">
    <original>R</original>
    <variation>A</variation>
    <location>
        <position position="337"/>
    </location>
</feature>
<feature type="mutagenesis site" description="Reduces catalytic activity." evidence="2">
    <original>E</original>
    <variation>A</variation>
    <location>
        <position position="386"/>
    </location>
</feature>
<feature type="helix" evidence="5">
    <location>
        <begin position="65"/>
        <end position="87"/>
    </location>
</feature>
<feature type="helix" evidence="5">
    <location>
        <begin position="94"/>
        <end position="107"/>
    </location>
</feature>
<feature type="strand" evidence="5">
    <location>
        <begin position="118"/>
        <end position="120"/>
    </location>
</feature>
<feature type="strand" evidence="5">
    <location>
        <begin position="125"/>
        <end position="127"/>
    </location>
</feature>
<feature type="helix" evidence="5">
    <location>
        <begin position="131"/>
        <end position="151"/>
    </location>
</feature>
<feature type="strand" evidence="5">
    <location>
        <begin position="152"/>
        <end position="154"/>
    </location>
</feature>
<feature type="helix" evidence="5">
    <location>
        <begin position="159"/>
        <end position="165"/>
    </location>
</feature>
<feature type="helix" evidence="5">
    <location>
        <begin position="168"/>
        <end position="172"/>
    </location>
</feature>
<feature type="helix" evidence="6">
    <location>
        <begin position="173"/>
        <end position="175"/>
    </location>
</feature>
<feature type="helix" evidence="5">
    <location>
        <begin position="180"/>
        <end position="204"/>
    </location>
</feature>
<feature type="strand" evidence="5">
    <location>
        <begin position="209"/>
        <end position="213"/>
    </location>
</feature>
<feature type="turn" evidence="5">
    <location>
        <begin position="216"/>
        <end position="218"/>
    </location>
</feature>
<feature type="strand" evidence="5">
    <location>
        <begin position="223"/>
        <end position="225"/>
    </location>
</feature>
<feature type="helix" evidence="5">
    <location>
        <begin position="232"/>
        <end position="245"/>
    </location>
</feature>
<feature type="strand" evidence="5">
    <location>
        <begin position="247"/>
        <end position="252"/>
    </location>
</feature>
<feature type="strand" evidence="5">
    <location>
        <begin position="257"/>
        <end position="261"/>
    </location>
</feature>
<feature type="helix" evidence="5">
    <location>
        <begin position="262"/>
        <end position="265"/>
    </location>
</feature>
<feature type="strand" evidence="5">
    <location>
        <begin position="270"/>
        <end position="278"/>
    </location>
</feature>
<feature type="helix" evidence="5">
    <location>
        <begin position="279"/>
        <end position="281"/>
    </location>
</feature>
<feature type="strand" evidence="5">
    <location>
        <begin position="283"/>
        <end position="286"/>
    </location>
</feature>
<feature type="strand" evidence="5">
    <location>
        <begin position="289"/>
        <end position="292"/>
    </location>
</feature>
<feature type="helix" evidence="5">
    <location>
        <begin position="300"/>
        <end position="316"/>
    </location>
</feature>
<feature type="strand" evidence="5">
    <location>
        <begin position="327"/>
        <end position="329"/>
    </location>
</feature>
<feature type="strand" evidence="6">
    <location>
        <begin position="331"/>
        <end position="334"/>
    </location>
</feature>
<feature type="strand" evidence="5">
    <location>
        <begin position="335"/>
        <end position="341"/>
    </location>
</feature>
<feature type="strand" evidence="5">
    <location>
        <begin position="345"/>
        <end position="347"/>
    </location>
</feature>
<feature type="helix" evidence="5">
    <location>
        <begin position="351"/>
        <end position="364"/>
    </location>
</feature>
<feature type="strand" evidence="5">
    <location>
        <begin position="376"/>
        <end position="378"/>
    </location>
</feature>
<feature type="strand" evidence="5">
    <location>
        <begin position="381"/>
        <end position="388"/>
    </location>
</feature>
<feature type="strand" evidence="6">
    <location>
        <begin position="391"/>
        <end position="393"/>
    </location>
</feature>
<feature type="helix" evidence="5">
    <location>
        <begin position="398"/>
        <end position="408"/>
    </location>
</feature>
<feature type="strand" evidence="5">
    <location>
        <begin position="415"/>
        <end position="417"/>
    </location>
</feature>
<feature type="strand" evidence="5">
    <location>
        <begin position="419"/>
        <end position="425"/>
    </location>
</feature>
<feature type="helix" evidence="5">
    <location>
        <begin position="426"/>
        <end position="428"/>
    </location>
</feature>
<feature type="helix" evidence="5">
    <location>
        <begin position="429"/>
        <end position="438"/>
    </location>
</feature>
<feature type="strand" evidence="5">
    <location>
        <begin position="440"/>
        <end position="442"/>
    </location>
</feature>
<feature type="strand" evidence="5">
    <location>
        <begin position="444"/>
        <end position="449"/>
    </location>
</feature>
<feature type="helix" evidence="5">
    <location>
        <begin position="452"/>
        <end position="461"/>
    </location>
</feature>
<feature type="strand" evidence="5">
    <location>
        <begin position="465"/>
        <end position="473"/>
    </location>
</feature>
<feature type="helix" evidence="5">
    <location>
        <begin position="474"/>
        <end position="490"/>
    </location>
</feature>
<keyword id="KW-0002">3D-structure</keyword>
<keyword id="KW-0378">Hydrolase</keyword>
<keyword id="KW-0460">Magnesium</keyword>
<keyword id="KW-0479">Metal-binding</keyword>
<keyword id="KW-1185">Reference proteome</keyword>